<evidence type="ECO:0000255" key="1">
    <source>
        <dbReference type="HAMAP-Rule" id="MF_00500"/>
    </source>
</evidence>
<evidence type="ECO:0000256" key="2">
    <source>
        <dbReference type="SAM" id="MobiDB-lite"/>
    </source>
</evidence>
<evidence type="ECO:0000305" key="3"/>
<feature type="chain" id="PRO_1000014562" description="Small ribosomal subunit protein bS20">
    <location>
        <begin position="1"/>
        <end position="90"/>
    </location>
</feature>
<feature type="region of interest" description="Disordered" evidence="2">
    <location>
        <begin position="1"/>
        <end position="25"/>
    </location>
</feature>
<comment type="function">
    <text evidence="1">Binds directly to 16S ribosomal RNA.</text>
</comment>
<comment type="similarity">
    <text evidence="1">Belongs to the bacterial ribosomal protein bS20 family.</text>
</comment>
<name>RS20_BURVG</name>
<organism>
    <name type="scientific">Burkholderia vietnamiensis (strain G4 / LMG 22486)</name>
    <name type="common">Burkholderia cepacia (strain R1808)</name>
    <dbReference type="NCBI Taxonomy" id="269482"/>
    <lineage>
        <taxon>Bacteria</taxon>
        <taxon>Pseudomonadati</taxon>
        <taxon>Pseudomonadota</taxon>
        <taxon>Betaproteobacteria</taxon>
        <taxon>Burkholderiales</taxon>
        <taxon>Burkholderiaceae</taxon>
        <taxon>Burkholderia</taxon>
        <taxon>Burkholderia cepacia complex</taxon>
    </lineage>
</organism>
<sequence length="90" mass="9539">MANSAQARKRARQAAKANSHNSALRSKFRTAIKSVRKAVEAGDQAKAAELFKAAVKTIDTIADKKIVHKNKAARSKSRLAAAVKGLQAAA</sequence>
<dbReference type="EMBL" id="CP000614">
    <property type="protein sequence ID" value="ABO55636.1"/>
    <property type="molecule type" value="Genomic_DNA"/>
</dbReference>
<dbReference type="SMR" id="A4JH83"/>
<dbReference type="KEGG" id="bvi:Bcep1808_2644"/>
<dbReference type="eggNOG" id="COG0268">
    <property type="taxonomic scope" value="Bacteria"/>
</dbReference>
<dbReference type="HOGENOM" id="CLU_160655_4_0_4"/>
<dbReference type="Proteomes" id="UP000002287">
    <property type="component" value="Chromosome 1"/>
</dbReference>
<dbReference type="GO" id="GO:0005829">
    <property type="term" value="C:cytosol"/>
    <property type="evidence" value="ECO:0007669"/>
    <property type="project" value="TreeGrafter"/>
</dbReference>
<dbReference type="GO" id="GO:0015935">
    <property type="term" value="C:small ribosomal subunit"/>
    <property type="evidence" value="ECO:0007669"/>
    <property type="project" value="TreeGrafter"/>
</dbReference>
<dbReference type="GO" id="GO:0070181">
    <property type="term" value="F:small ribosomal subunit rRNA binding"/>
    <property type="evidence" value="ECO:0007669"/>
    <property type="project" value="TreeGrafter"/>
</dbReference>
<dbReference type="GO" id="GO:0003735">
    <property type="term" value="F:structural constituent of ribosome"/>
    <property type="evidence" value="ECO:0007669"/>
    <property type="project" value="InterPro"/>
</dbReference>
<dbReference type="GO" id="GO:0006412">
    <property type="term" value="P:translation"/>
    <property type="evidence" value="ECO:0007669"/>
    <property type="project" value="UniProtKB-UniRule"/>
</dbReference>
<dbReference type="FunFam" id="1.20.58.110:FF:000001">
    <property type="entry name" value="30S ribosomal protein S20"/>
    <property type="match status" value="1"/>
</dbReference>
<dbReference type="Gene3D" id="1.20.58.110">
    <property type="entry name" value="Ribosomal protein S20"/>
    <property type="match status" value="1"/>
</dbReference>
<dbReference type="HAMAP" id="MF_00500">
    <property type="entry name" value="Ribosomal_bS20"/>
    <property type="match status" value="1"/>
</dbReference>
<dbReference type="InterPro" id="IPR002583">
    <property type="entry name" value="Ribosomal_bS20"/>
</dbReference>
<dbReference type="InterPro" id="IPR036510">
    <property type="entry name" value="Ribosomal_bS20_sf"/>
</dbReference>
<dbReference type="NCBIfam" id="TIGR00029">
    <property type="entry name" value="S20"/>
    <property type="match status" value="1"/>
</dbReference>
<dbReference type="PANTHER" id="PTHR33398">
    <property type="entry name" value="30S RIBOSOMAL PROTEIN S20"/>
    <property type="match status" value="1"/>
</dbReference>
<dbReference type="PANTHER" id="PTHR33398:SF1">
    <property type="entry name" value="SMALL RIBOSOMAL SUBUNIT PROTEIN BS20C"/>
    <property type="match status" value="1"/>
</dbReference>
<dbReference type="Pfam" id="PF01649">
    <property type="entry name" value="Ribosomal_S20p"/>
    <property type="match status" value="1"/>
</dbReference>
<dbReference type="SUPFAM" id="SSF46992">
    <property type="entry name" value="Ribosomal protein S20"/>
    <property type="match status" value="1"/>
</dbReference>
<keyword id="KW-0687">Ribonucleoprotein</keyword>
<keyword id="KW-0689">Ribosomal protein</keyword>
<keyword id="KW-0694">RNA-binding</keyword>
<keyword id="KW-0699">rRNA-binding</keyword>
<proteinExistence type="inferred from homology"/>
<gene>
    <name evidence="1" type="primary">rpsT</name>
    <name type="ordered locus">Bcep1808_2644</name>
</gene>
<reference key="1">
    <citation type="submission" date="2007-03" db="EMBL/GenBank/DDBJ databases">
        <title>Complete sequence of chromosome 1 of Burkholderia vietnamiensis G4.</title>
        <authorList>
            <consortium name="US DOE Joint Genome Institute"/>
            <person name="Copeland A."/>
            <person name="Lucas S."/>
            <person name="Lapidus A."/>
            <person name="Barry K."/>
            <person name="Detter J.C."/>
            <person name="Glavina del Rio T."/>
            <person name="Hammon N."/>
            <person name="Israni S."/>
            <person name="Dalin E."/>
            <person name="Tice H."/>
            <person name="Pitluck S."/>
            <person name="Chain P."/>
            <person name="Malfatti S."/>
            <person name="Shin M."/>
            <person name="Vergez L."/>
            <person name="Schmutz J."/>
            <person name="Larimer F."/>
            <person name="Land M."/>
            <person name="Hauser L."/>
            <person name="Kyrpides N."/>
            <person name="Tiedje J."/>
            <person name="Richardson P."/>
        </authorList>
    </citation>
    <scope>NUCLEOTIDE SEQUENCE [LARGE SCALE GENOMIC DNA]</scope>
    <source>
        <strain>G4 / LMG 22486</strain>
    </source>
</reference>
<protein>
    <recommendedName>
        <fullName evidence="1">Small ribosomal subunit protein bS20</fullName>
    </recommendedName>
    <alternativeName>
        <fullName evidence="3">30S ribosomal protein S20</fullName>
    </alternativeName>
</protein>
<accession>A4JH83</accession>